<accession>Q7TN41</accession>
<accession>Q6L788</accession>
<reference key="1">
    <citation type="journal article" date="2003" name="Proc. Natl. Acad. Sci. U.S.A.">
        <title>Atypical expansion in mice of the sensory neuron-specific Mrg G protein-coupled receptor family.</title>
        <authorList>
            <person name="Zylka M.J."/>
            <person name="Dong X."/>
            <person name="Southwell A.L."/>
            <person name="Anderson D.J."/>
        </authorList>
    </citation>
    <scope>NUCLEOTIDE SEQUENCE</scope>
    <source>
        <strain>Sprague-Dawley</strain>
    </source>
</reference>
<reference key="2">
    <citation type="journal article" date="2004" name="J. Biol. Chem.">
        <title>Identification of a G protein-coupled receptor specifically responsive to beta-alanine.</title>
        <authorList>
            <person name="Shinohara T."/>
            <person name="Harada M."/>
            <person name="Ogi K."/>
            <person name="Maruyama M."/>
            <person name="Fujii R."/>
            <person name="Tanaka H."/>
            <person name="Fukusumi S."/>
            <person name="Komatsu H."/>
            <person name="Hosoya M."/>
            <person name="Noguchi Y."/>
            <person name="Watanabe T."/>
            <person name="Moriya T."/>
            <person name="Itoh Y."/>
            <person name="Hinuma S."/>
        </authorList>
    </citation>
    <scope>NUCLEOTIDE SEQUENCE [MRNA]</scope>
    <scope>TISSUE SPECIFICITY</scope>
    <source>
        <tissue>Cerebellum</tissue>
    </source>
</reference>
<sequence>MNYTPYSSPAPGLTISPTMDPVTWVYFSVTFLAMATCVCGIVGNSMVIWLLSFHRVQRSPFCTYVLNLAVADLLFLLCMASLLSLETGPLLTASTSARVYEGMKRIKYFAYTAGLSLLTAISTQRCLSVLFPIWYKCHRPQHLSGVVCGVLWALALLMNFLASFFCVQFWHPDKYQCFKVDMVFNSLILGIFMPVMVLTSAIIFIRMRKNSLLQRRQPRRLYVVILTSVLVFLTCSLPLGINWFLLYWVELPQAVRLLYVCSSRFSSSLSSSANPVIYFLVGSQKSHRLQESLGAVLGRALQDEPEGRETPSTCTNDGV</sequence>
<evidence type="ECO:0000250" key="1"/>
<evidence type="ECO:0000255" key="2"/>
<evidence type="ECO:0000255" key="3">
    <source>
        <dbReference type="PROSITE-ProRule" id="PRU00521"/>
    </source>
</evidence>
<evidence type="ECO:0000269" key="4">
    <source>
    </source>
</evidence>
<evidence type="ECO:0000305" key="5"/>
<dbReference type="EMBL" id="AF518246">
    <property type="protein sequence ID" value="AAQ08318.1"/>
    <property type="molecule type" value="Genomic_DNA"/>
</dbReference>
<dbReference type="EMBL" id="AB154411">
    <property type="protein sequence ID" value="BAD20639.1"/>
    <property type="molecule type" value="mRNA"/>
</dbReference>
<dbReference type="RefSeq" id="NP_001001506.1">
    <property type="nucleotide sequence ID" value="NM_001001506.2"/>
</dbReference>
<dbReference type="RefSeq" id="XP_006230787.1">
    <property type="nucleotide sequence ID" value="XM_006230725.3"/>
</dbReference>
<dbReference type="SMR" id="Q7TN41"/>
<dbReference type="FunCoup" id="Q7TN41">
    <property type="interactions" value="87"/>
</dbReference>
<dbReference type="STRING" id="10116.ENSRNOP00000017958"/>
<dbReference type="GuidetoPHARMACOLOGY" id="152"/>
<dbReference type="PhosphoSitePlus" id="Q7TN41"/>
<dbReference type="PaxDb" id="10116-ENSRNOP00000017958"/>
<dbReference type="Ensembl" id="ENSRNOT00000017958.3">
    <property type="protein sequence ID" value="ENSRNOP00000017958.1"/>
    <property type="gene ID" value="ENSRNOG00000013448.3"/>
</dbReference>
<dbReference type="GeneID" id="293648"/>
<dbReference type="KEGG" id="rno:293648"/>
<dbReference type="UCSC" id="RGD:738040">
    <property type="organism name" value="rat"/>
</dbReference>
<dbReference type="AGR" id="RGD:738040"/>
<dbReference type="CTD" id="116512"/>
<dbReference type="RGD" id="738040">
    <property type="gene designation" value="Mrgprd"/>
</dbReference>
<dbReference type="eggNOG" id="ENOG502SNJC">
    <property type="taxonomic scope" value="Eukaryota"/>
</dbReference>
<dbReference type="GeneTree" id="ENSGT01030000234639"/>
<dbReference type="HOGENOM" id="CLU_009579_4_1_1"/>
<dbReference type="InParanoid" id="Q7TN41"/>
<dbReference type="OMA" id="KCHRPRH"/>
<dbReference type="OrthoDB" id="9631784at2759"/>
<dbReference type="PhylomeDB" id="Q7TN41"/>
<dbReference type="TreeFam" id="TF336336"/>
<dbReference type="PRO" id="PR:Q7TN41"/>
<dbReference type="Proteomes" id="UP000002494">
    <property type="component" value="Chromosome 1"/>
</dbReference>
<dbReference type="Bgee" id="ENSRNOG00000013448">
    <property type="expression patterns" value="Expressed in testis"/>
</dbReference>
<dbReference type="ExpressionAtlas" id="Q7TN41">
    <property type="expression patterns" value="baseline"/>
</dbReference>
<dbReference type="GO" id="GO:0005886">
    <property type="term" value="C:plasma membrane"/>
    <property type="evidence" value="ECO:0000318"/>
    <property type="project" value="GO_Central"/>
</dbReference>
<dbReference type="GO" id="GO:0008528">
    <property type="term" value="F:G protein-coupled peptide receptor activity"/>
    <property type="evidence" value="ECO:0000266"/>
    <property type="project" value="RGD"/>
</dbReference>
<dbReference type="GO" id="GO:0004930">
    <property type="term" value="F:G protein-coupled receptor activity"/>
    <property type="evidence" value="ECO:0000318"/>
    <property type="project" value="GO_Central"/>
</dbReference>
<dbReference type="GO" id="GO:0007189">
    <property type="term" value="P:adenylate cyclase-activating G protein-coupled receptor signaling pathway"/>
    <property type="evidence" value="ECO:0000266"/>
    <property type="project" value="RGD"/>
</dbReference>
<dbReference type="GO" id="GO:0002033">
    <property type="term" value="P:angiotensin-mediated vasodilation involved in regulation of systemic arterial blood pressure"/>
    <property type="evidence" value="ECO:0000266"/>
    <property type="project" value="RGD"/>
</dbReference>
<dbReference type="GO" id="GO:0007186">
    <property type="term" value="P:G protein-coupled receptor signaling pathway"/>
    <property type="evidence" value="ECO:0000318"/>
    <property type="project" value="GO_Central"/>
</dbReference>
<dbReference type="CDD" id="cd15108">
    <property type="entry name" value="7tmA_MrgprD"/>
    <property type="match status" value="1"/>
</dbReference>
<dbReference type="FunFam" id="1.20.1070.10:FF:000193">
    <property type="entry name" value="Mas-related G-protein coupled receptor member E"/>
    <property type="match status" value="1"/>
</dbReference>
<dbReference type="Gene3D" id="1.20.1070.10">
    <property type="entry name" value="Rhodopsin 7-helix transmembrane proteins"/>
    <property type="match status" value="1"/>
</dbReference>
<dbReference type="InterPro" id="IPR000276">
    <property type="entry name" value="GPCR_Rhodpsn"/>
</dbReference>
<dbReference type="InterPro" id="IPR017452">
    <property type="entry name" value="GPCR_Rhodpsn_7TM"/>
</dbReference>
<dbReference type="InterPro" id="IPR026232">
    <property type="entry name" value="MRGPCRD"/>
</dbReference>
<dbReference type="InterPro" id="IPR026234">
    <property type="entry name" value="MRGPCRFAMILY"/>
</dbReference>
<dbReference type="PANTHER" id="PTHR11334">
    <property type="entry name" value="MAS-RELATED G-PROTEIN COUPLED RECEPTOR"/>
    <property type="match status" value="1"/>
</dbReference>
<dbReference type="PANTHER" id="PTHR11334:SF57">
    <property type="entry name" value="MAS-RELATED G-PROTEIN COUPLED RECEPTOR MEMBER D"/>
    <property type="match status" value="1"/>
</dbReference>
<dbReference type="Pfam" id="PF00001">
    <property type="entry name" value="7tm_1"/>
    <property type="match status" value="1"/>
</dbReference>
<dbReference type="PRINTS" id="PR00237">
    <property type="entry name" value="GPCRRHODOPSN"/>
</dbReference>
<dbReference type="PRINTS" id="PR02110">
    <property type="entry name" value="MRGPCRD"/>
</dbReference>
<dbReference type="PRINTS" id="PR02108">
    <property type="entry name" value="MRGPCRFAMILY"/>
</dbReference>
<dbReference type="SUPFAM" id="SSF81321">
    <property type="entry name" value="Family A G protein-coupled receptor-like"/>
    <property type="match status" value="1"/>
</dbReference>
<dbReference type="PROSITE" id="PS50262">
    <property type="entry name" value="G_PROTEIN_RECEP_F1_2"/>
    <property type="match status" value="1"/>
</dbReference>
<protein>
    <recommendedName>
        <fullName>Mas-related G-protein coupled receptor member D</fullName>
    </recommendedName>
    <alternativeName>
        <fullName>Beta-alanine receptor</fullName>
    </alternativeName>
    <alternativeName>
        <fullName>G-protein coupled receptor TGR7</fullName>
    </alternativeName>
</protein>
<keyword id="KW-1003">Cell membrane</keyword>
<keyword id="KW-0297">G-protein coupled receptor</keyword>
<keyword id="KW-0472">Membrane</keyword>
<keyword id="KW-0675">Receptor</keyword>
<keyword id="KW-1185">Reference proteome</keyword>
<keyword id="KW-0807">Transducer</keyword>
<keyword id="KW-0812">Transmembrane</keyword>
<keyword id="KW-1133">Transmembrane helix</keyword>
<proteinExistence type="evidence at transcript level"/>
<name>MRGRD_RAT</name>
<comment type="function">
    <text evidence="1">May regulate nociceptor function and/or development, including the sensation or modulation of pain. Functions as a specific membrane receptor for beta-alanine. The receptor couples with G-protein G(q) and G(i) (By similarity).</text>
</comment>
<comment type="subcellular location">
    <subcellularLocation>
        <location>Cell membrane</location>
        <topology>Multi-pass membrane protein</topology>
    </subcellularLocation>
</comment>
<comment type="tissue specificity">
    <text evidence="4">Co-expressed in the small diameter neurons with P2X3 and VR1 in dorsal root ganglia.</text>
</comment>
<comment type="similarity">
    <text evidence="3">Belongs to the G-protein coupled receptor 1 family. Mas subfamily.</text>
</comment>
<organism>
    <name type="scientific">Rattus norvegicus</name>
    <name type="common">Rat</name>
    <dbReference type="NCBI Taxonomy" id="10116"/>
    <lineage>
        <taxon>Eukaryota</taxon>
        <taxon>Metazoa</taxon>
        <taxon>Chordata</taxon>
        <taxon>Craniata</taxon>
        <taxon>Vertebrata</taxon>
        <taxon>Euteleostomi</taxon>
        <taxon>Mammalia</taxon>
        <taxon>Eutheria</taxon>
        <taxon>Euarchontoglires</taxon>
        <taxon>Glires</taxon>
        <taxon>Rodentia</taxon>
        <taxon>Myomorpha</taxon>
        <taxon>Muroidea</taxon>
        <taxon>Muridae</taxon>
        <taxon>Murinae</taxon>
        <taxon>Rattus</taxon>
    </lineage>
</organism>
<feature type="chain" id="PRO_0000069759" description="Mas-related G-protein coupled receptor member D">
    <location>
        <begin position="1"/>
        <end position="319"/>
    </location>
</feature>
<feature type="topological domain" description="Extracellular" evidence="2">
    <location>
        <begin position="1"/>
        <end position="30"/>
    </location>
</feature>
<feature type="transmembrane region" description="Helical; Name=1" evidence="2">
    <location>
        <begin position="31"/>
        <end position="51"/>
    </location>
</feature>
<feature type="topological domain" description="Cytoplasmic" evidence="2">
    <location>
        <begin position="52"/>
        <end position="64"/>
    </location>
</feature>
<feature type="transmembrane region" description="Helical; Name=2" evidence="2">
    <location>
        <begin position="65"/>
        <end position="85"/>
    </location>
</feature>
<feature type="topological domain" description="Extracellular" evidence="2">
    <location>
        <begin position="86"/>
        <end position="92"/>
    </location>
</feature>
<feature type="transmembrane region" description="Helical; Name=3" evidence="2">
    <location>
        <begin position="93"/>
        <end position="113"/>
    </location>
</feature>
<feature type="topological domain" description="Cytoplasmic" evidence="2">
    <location>
        <begin position="114"/>
        <end position="144"/>
    </location>
</feature>
<feature type="transmembrane region" description="Helical; Name=4" evidence="2">
    <location>
        <begin position="145"/>
        <end position="165"/>
    </location>
</feature>
<feature type="topological domain" description="Extracellular" evidence="2">
    <location>
        <begin position="166"/>
        <end position="184"/>
    </location>
</feature>
<feature type="transmembrane region" description="Helical; Name=5" evidence="2">
    <location>
        <begin position="185"/>
        <end position="205"/>
    </location>
</feature>
<feature type="topological domain" description="Cytoplasmic" evidence="2">
    <location>
        <begin position="206"/>
        <end position="220"/>
    </location>
</feature>
<feature type="transmembrane region" description="Helical; Name=6" evidence="2">
    <location>
        <begin position="221"/>
        <end position="241"/>
    </location>
</feature>
<feature type="topological domain" description="Extracellular" evidence="2">
    <location>
        <begin position="242"/>
        <end position="260"/>
    </location>
</feature>
<feature type="transmembrane region" description="Helical; Name=7" evidence="2">
    <location>
        <begin position="261"/>
        <end position="281"/>
    </location>
</feature>
<feature type="topological domain" description="Cytoplasmic" evidence="2">
    <location>
        <begin position="282"/>
        <end position="319"/>
    </location>
</feature>
<feature type="sequence conflict" description="In Ref. 2; BAD20639." evidence="5" ref="2">
    <original>R</original>
    <variation>S</variation>
    <location>
        <position position="55"/>
    </location>
</feature>
<gene>
    <name type="primary">Mrgprd</name>
    <name type="synonym">Mrgd</name>
</gene>